<dbReference type="EMBL" id="AJ938182">
    <property type="protein sequence ID" value="CAI81743.1"/>
    <property type="molecule type" value="Genomic_DNA"/>
</dbReference>
<dbReference type="RefSeq" id="WP_001251935.1">
    <property type="nucleotide sequence ID" value="NC_007622.1"/>
</dbReference>
<dbReference type="SMR" id="Q2YYH2"/>
<dbReference type="KEGG" id="sab:SAB2054"/>
<dbReference type="HOGENOM" id="CLU_174851_0_0_9"/>
<dbReference type="InterPro" id="IPR055365">
    <property type="entry name" value="PH_SunI-like"/>
</dbReference>
<dbReference type="Pfam" id="PF23491">
    <property type="entry name" value="bPH_8"/>
    <property type="match status" value="1"/>
</dbReference>
<proteinExistence type="inferred from homology"/>
<sequence length="86" mass="10006">MAMTVKKDNNEVRIQWRVADIKIPTSEIKNITQDQDIHAVPKLDSKDVSRIGSTFGKTNRVIIDTEDHEYIIYTQNDQKVYNELTK</sequence>
<evidence type="ECO:0000305" key="1"/>
<gene>
    <name type="ordered locus">SAB2054</name>
</gene>
<comment type="similarity">
    <text evidence="1">Belongs to the UPF0457 family.</text>
</comment>
<name>Y2054_STAAB</name>
<protein>
    <recommendedName>
        <fullName>UPF0457 protein SAB2054</fullName>
    </recommendedName>
</protein>
<accession>Q2YYH2</accession>
<organism>
    <name type="scientific">Staphylococcus aureus (strain bovine RF122 / ET3-1)</name>
    <dbReference type="NCBI Taxonomy" id="273036"/>
    <lineage>
        <taxon>Bacteria</taxon>
        <taxon>Bacillati</taxon>
        <taxon>Bacillota</taxon>
        <taxon>Bacilli</taxon>
        <taxon>Bacillales</taxon>
        <taxon>Staphylococcaceae</taxon>
        <taxon>Staphylococcus</taxon>
    </lineage>
</organism>
<reference key="1">
    <citation type="journal article" date="2007" name="PLoS ONE">
        <title>Molecular correlates of host specialization in Staphylococcus aureus.</title>
        <authorList>
            <person name="Herron-Olson L."/>
            <person name="Fitzgerald J.R."/>
            <person name="Musser J.M."/>
            <person name="Kapur V."/>
        </authorList>
    </citation>
    <scope>NUCLEOTIDE SEQUENCE [LARGE SCALE GENOMIC DNA]</scope>
    <source>
        <strain>bovine RF122 / ET3-1</strain>
    </source>
</reference>
<feature type="chain" id="PRO_0000294497" description="UPF0457 protein SAB2054">
    <location>
        <begin position="1"/>
        <end position="86"/>
    </location>
</feature>